<accession>A9BRW3</accession>
<protein>
    <recommendedName>
        <fullName evidence="1">Large ribosomal subunit protein uL5</fullName>
    </recommendedName>
    <alternativeName>
        <fullName evidence="2">50S ribosomal protein L5</fullName>
    </alternativeName>
</protein>
<proteinExistence type="inferred from homology"/>
<organism>
    <name type="scientific">Delftia acidovorans (strain DSM 14801 / SPH-1)</name>
    <dbReference type="NCBI Taxonomy" id="398578"/>
    <lineage>
        <taxon>Bacteria</taxon>
        <taxon>Pseudomonadati</taxon>
        <taxon>Pseudomonadota</taxon>
        <taxon>Betaproteobacteria</taxon>
        <taxon>Burkholderiales</taxon>
        <taxon>Comamonadaceae</taxon>
        <taxon>Delftia</taxon>
    </lineage>
</organism>
<sequence length="179" mass="20018">MARLQKLYREKIAAELKEKFGYTSSMEVPRLTKITLNMGVSEAVADKKVMDNAVADLTKIAGQKPVVTKAKKAIAGFKIREGQAIGCMVTLRGVQMYEFLDRFVTVALPRVRDFRGISGRSFDGRGNYNVGVKEQIIFPEIEYDKVDALRGLNISITTTARTDDECKALLAAFRFPFKN</sequence>
<reference key="1">
    <citation type="submission" date="2007-11" db="EMBL/GenBank/DDBJ databases">
        <title>Complete sequence of Delftia acidovorans DSM 14801 / SPH-1.</title>
        <authorList>
            <person name="Copeland A."/>
            <person name="Lucas S."/>
            <person name="Lapidus A."/>
            <person name="Barry K."/>
            <person name="Glavina del Rio T."/>
            <person name="Dalin E."/>
            <person name="Tice H."/>
            <person name="Pitluck S."/>
            <person name="Lowry S."/>
            <person name="Clum A."/>
            <person name="Schmutz J."/>
            <person name="Larimer F."/>
            <person name="Land M."/>
            <person name="Hauser L."/>
            <person name="Kyrpides N."/>
            <person name="Kim E."/>
            <person name="Schleheck D."/>
            <person name="Richardson P."/>
        </authorList>
    </citation>
    <scope>NUCLEOTIDE SEQUENCE [LARGE SCALE GENOMIC DNA]</scope>
    <source>
        <strain>DSM 14801 / SPH-1</strain>
    </source>
</reference>
<keyword id="KW-1185">Reference proteome</keyword>
<keyword id="KW-0687">Ribonucleoprotein</keyword>
<keyword id="KW-0689">Ribosomal protein</keyword>
<keyword id="KW-0694">RNA-binding</keyword>
<keyword id="KW-0699">rRNA-binding</keyword>
<keyword id="KW-0820">tRNA-binding</keyword>
<comment type="function">
    <text evidence="1">This is one of the proteins that bind and probably mediate the attachment of the 5S RNA into the large ribosomal subunit, where it forms part of the central protuberance. In the 70S ribosome it contacts protein S13 of the 30S subunit (bridge B1b), connecting the 2 subunits; this bridge is implicated in subunit movement. Contacts the P site tRNA; the 5S rRNA and some of its associated proteins might help stabilize positioning of ribosome-bound tRNAs.</text>
</comment>
<comment type="subunit">
    <text evidence="1">Part of the 50S ribosomal subunit; part of the 5S rRNA/L5/L18/L25 subcomplex. Contacts the 5S rRNA and the P site tRNA. Forms a bridge to the 30S subunit in the 70S ribosome.</text>
</comment>
<comment type="similarity">
    <text evidence="1">Belongs to the universal ribosomal protein uL5 family.</text>
</comment>
<feature type="chain" id="PRO_1000142386" description="Large ribosomal subunit protein uL5">
    <location>
        <begin position="1"/>
        <end position="179"/>
    </location>
</feature>
<name>RL5_DELAS</name>
<gene>
    <name evidence="1" type="primary">rplE</name>
    <name type="ordered locus">Daci_1034</name>
</gene>
<evidence type="ECO:0000255" key="1">
    <source>
        <dbReference type="HAMAP-Rule" id="MF_01333"/>
    </source>
</evidence>
<evidence type="ECO:0000305" key="2"/>
<dbReference type="EMBL" id="CP000884">
    <property type="protein sequence ID" value="ABX33680.1"/>
    <property type="molecule type" value="Genomic_DNA"/>
</dbReference>
<dbReference type="RefSeq" id="WP_012202966.1">
    <property type="nucleotide sequence ID" value="NC_010002.1"/>
</dbReference>
<dbReference type="SMR" id="A9BRW3"/>
<dbReference type="STRING" id="398578.Daci_1034"/>
<dbReference type="GeneID" id="24117980"/>
<dbReference type="KEGG" id="dac:Daci_1034"/>
<dbReference type="eggNOG" id="COG0094">
    <property type="taxonomic scope" value="Bacteria"/>
</dbReference>
<dbReference type="HOGENOM" id="CLU_061015_2_1_4"/>
<dbReference type="Proteomes" id="UP000000784">
    <property type="component" value="Chromosome"/>
</dbReference>
<dbReference type="GO" id="GO:1990904">
    <property type="term" value="C:ribonucleoprotein complex"/>
    <property type="evidence" value="ECO:0007669"/>
    <property type="project" value="UniProtKB-KW"/>
</dbReference>
<dbReference type="GO" id="GO:0005840">
    <property type="term" value="C:ribosome"/>
    <property type="evidence" value="ECO:0007669"/>
    <property type="project" value="UniProtKB-KW"/>
</dbReference>
<dbReference type="GO" id="GO:0019843">
    <property type="term" value="F:rRNA binding"/>
    <property type="evidence" value="ECO:0007669"/>
    <property type="project" value="UniProtKB-UniRule"/>
</dbReference>
<dbReference type="GO" id="GO:0003735">
    <property type="term" value="F:structural constituent of ribosome"/>
    <property type="evidence" value="ECO:0007669"/>
    <property type="project" value="InterPro"/>
</dbReference>
<dbReference type="GO" id="GO:0000049">
    <property type="term" value="F:tRNA binding"/>
    <property type="evidence" value="ECO:0007669"/>
    <property type="project" value="UniProtKB-UniRule"/>
</dbReference>
<dbReference type="GO" id="GO:0006412">
    <property type="term" value="P:translation"/>
    <property type="evidence" value="ECO:0007669"/>
    <property type="project" value="UniProtKB-UniRule"/>
</dbReference>
<dbReference type="FunFam" id="3.30.1440.10:FF:000001">
    <property type="entry name" value="50S ribosomal protein L5"/>
    <property type="match status" value="1"/>
</dbReference>
<dbReference type="Gene3D" id="3.30.1440.10">
    <property type="match status" value="1"/>
</dbReference>
<dbReference type="HAMAP" id="MF_01333_B">
    <property type="entry name" value="Ribosomal_uL5_B"/>
    <property type="match status" value="1"/>
</dbReference>
<dbReference type="InterPro" id="IPR002132">
    <property type="entry name" value="Ribosomal_uL5"/>
</dbReference>
<dbReference type="InterPro" id="IPR020930">
    <property type="entry name" value="Ribosomal_uL5_bac-type"/>
</dbReference>
<dbReference type="InterPro" id="IPR031309">
    <property type="entry name" value="Ribosomal_uL5_C"/>
</dbReference>
<dbReference type="InterPro" id="IPR020929">
    <property type="entry name" value="Ribosomal_uL5_CS"/>
</dbReference>
<dbReference type="InterPro" id="IPR022803">
    <property type="entry name" value="Ribosomal_uL5_dom_sf"/>
</dbReference>
<dbReference type="InterPro" id="IPR031310">
    <property type="entry name" value="Ribosomal_uL5_N"/>
</dbReference>
<dbReference type="NCBIfam" id="NF000585">
    <property type="entry name" value="PRK00010.1"/>
    <property type="match status" value="1"/>
</dbReference>
<dbReference type="PANTHER" id="PTHR11994">
    <property type="entry name" value="60S RIBOSOMAL PROTEIN L11-RELATED"/>
    <property type="match status" value="1"/>
</dbReference>
<dbReference type="Pfam" id="PF00281">
    <property type="entry name" value="Ribosomal_L5"/>
    <property type="match status" value="1"/>
</dbReference>
<dbReference type="Pfam" id="PF00673">
    <property type="entry name" value="Ribosomal_L5_C"/>
    <property type="match status" value="1"/>
</dbReference>
<dbReference type="PIRSF" id="PIRSF002161">
    <property type="entry name" value="Ribosomal_L5"/>
    <property type="match status" value="1"/>
</dbReference>
<dbReference type="SUPFAM" id="SSF55282">
    <property type="entry name" value="RL5-like"/>
    <property type="match status" value="1"/>
</dbReference>
<dbReference type="PROSITE" id="PS00358">
    <property type="entry name" value="RIBOSOMAL_L5"/>
    <property type="match status" value="1"/>
</dbReference>